<name>HGD_RHIE6</name>
<sequence length="453" mass="50885">MDQTSIQASSGDAAAADQLKYMPGFGNDFETESLPGALPQGQNSPQKCNYGLYAEQLSGSPFTAPRGTNERSWLYRIRPSVRHTRRFSNASYPLWKTAPCLDEHSLPLGQLRWDPIPPPEERLNFLEGVRTITTAGDATTQVGMSAHAYVFNEDMVDDYFFNADGELLIVPQLGALRVFTEMGIMDVEPSEICLVPRGMMFKILTSGKQTAWRGYICENYGAKFTLPERGPIGANCLANPRDFKTPVAAYEDKEKPCRVHVKWCGKFYVTEIGHSPLDVVAWHGNYAPFKYDLRTFSPVGAILFDHPDPSIFSVLTAPTEDAGTANVDFVIFPPRWLVAEHTFRPPWYHRNIMSEFMGLIHGQYDAKEEGFVPGGMSLHNMMLPHGPDALAFEKAANAELKPVKLDHTMAFMFETRYPQQLTKYAAELETLQDDYLECWDGLERKFDGNPGIK</sequence>
<gene>
    <name evidence="1" type="primary">hmgA</name>
    <name type="ordered locus">RHECIAT_CH0001827</name>
</gene>
<feature type="chain" id="PRO_1000119848" description="Homogentisate 1,2-dioxygenase">
    <location>
        <begin position="1"/>
        <end position="453"/>
    </location>
</feature>
<feature type="active site" description="Proton acceptor" evidence="1">
    <location>
        <position position="306"/>
    </location>
</feature>
<feature type="binding site" evidence="1">
    <location>
        <position position="349"/>
    </location>
    <ligand>
        <name>Fe cation</name>
        <dbReference type="ChEBI" id="CHEBI:24875"/>
    </ligand>
</feature>
<feature type="binding site" evidence="1">
    <location>
        <position position="355"/>
    </location>
    <ligand>
        <name>Fe cation</name>
        <dbReference type="ChEBI" id="CHEBI:24875"/>
    </ligand>
</feature>
<feature type="binding site" evidence="1">
    <location>
        <position position="364"/>
    </location>
    <ligand>
        <name>homogentisate</name>
        <dbReference type="ChEBI" id="CHEBI:16169"/>
    </ligand>
</feature>
<feature type="binding site" evidence="1">
    <location>
        <position position="385"/>
    </location>
    <ligand>
        <name>Fe cation</name>
        <dbReference type="ChEBI" id="CHEBI:24875"/>
    </ligand>
</feature>
<feature type="binding site" evidence="1">
    <location>
        <position position="385"/>
    </location>
    <ligand>
        <name>homogentisate</name>
        <dbReference type="ChEBI" id="CHEBI:16169"/>
    </ligand>
</feature>
<keyword id="KW-0223">Dioxygenase</keyword>
<keyword id="KW-0408">Iron</keyword>
<keyword id="KW-0479">Metal-binding</keyword>
<keyword id="KW-0560">Oxidoreductase</keyword>
<keyword id="KW-0585">Phenylalanine catabolism</keyword>
<keyword id="KW-0828">Tyrosine catabolism</keyword>
<reference key="1">
    <citation type="journal article" date="2010" name="Appl. Environ. Microbiol.">
        <title>Conserved symbiotic plasmid DNA sequences in the multireplicon pangenomic structure of Rhizobium etli.</title>
        <authorList>
            <person name="Gonzalez V."/>
            <person name="Acosta J.L."/>
            <person name="Santamaria R.I."/>
            <person name="Bustos P."/>
            <person name="Fernandez J.L."/>
            <person name="Hernandez Gonzalez I.L."/>
            <person name="Diaz R."/>
            <person name="Flores M."/>
            <person name="Palacios R."/>
            <person name="Mora J."/>
            <person name="Davila G."/>
        </authorList>
    </citation>
    <scope>NUCLEOTIDE SEQUENCE [LARGE SCALE GENOMIC DNA]</scope>
    <source>
        <strain>CIAT 652</strain>
    </source>
</reference>
<organism>
    <name type="scientific">Rhizobium etli (strain CIAT 652)</name>
    <dbReference type="NCBI Taxonomy" id="491916"/>
    <lineage>
        <taxon>Bacteria</taxon>
        <taxon>Pseudomonadati</taxon>
        <taxon>Pseudomonadota</taxon>
        <taxon>Alphaproteobacteria</taxon>
        <taxon>Hyphomicrobiales</taxon>
        <taxon>Rhizobiaceae</taxon>
        <taxon>Rhizobium/Agrobacterium group</taxon>
        <taxon>Rhizobium</taxon>
    </lineage>
</organism>
<dbReference type="EC" id="1.13.11.5" evidence="1"/>
<dbReference type="EMBL" id="CP001074">
    <property type="protein sequence ID" value="ACE90797.1"/>
    <property type="molecule type" value="Genomic_DNA"/>
</dbReference>
<dbReference type="SMR" id="B3PWZ9"/>
<dbReference type="KEGG" id="rec:RHECIAT_CH0001827"/>
<dbReference type="eggNOG" id="COG3508">
    <property type="taxonomic scope" value="Bacteria"/>
</dbReference>
<dbReference type="HOGENOM" id="CLU_027174_0_0_5"/>
<dbReference type="UniPathway" id="UPA00139">
    <property type="reaction ID" value="UER00339"/>
</dbReference>
<dbReference type="Proteomes" id="UP000008817">
    <property type="component" value="Chromosome"/>
</dbReference>
<dbReference type="GO" id="GO:0005737">
    <property type="term" value="C:cytoplasm"/>
    <property type="evidence" value="ECO:0007669"/>
    <property type="project" value="TreeGrafter"/>
</dbReference>
<dbReference type="GO" id="GO:0004411">
    <property type="term" value="F:homogentisate 1,2-dioxygenase activity"/>
    <property type="evidence" value="ECO:0007669"/>
    <property type="project" value="UniProtKB-UniRule"/>
</dbReference>
<dbReference type="GO" id="GO:0005506">
    <property type="term" value="F:iron ion binding"/>
    <property type="evidence" value="ECO:0007669"/>
    <property type="project" value="UniProtKB-UniRule"/>
</dbReference>
<dbReference type="GO" id="GO:0006559">
    <property type="term" value="P:L-phenylalanine catabolic process"/>
    <property type="evidence" value="ECO:0007669"/>
    <property type="project" value="UniProtKB-UniRule"/>
</dbReference>
<dbReference type="GO" id="GO:0006572">
    <property type="term" value="P:tyrosine catabolic process"/>
    <property type="evidence" value="ECO:0007669"/>
    <property type="project" value="UniProtKB-UniRule"/>
</dbReference>
<dbReference type="CDD" id="cd07000">
    <property type="entry name" value="cupin_HGO_N"/>
    <property type="match status" value="1"/>
</dbReference>
<dbReference type="FunFam" id="2.60.120.10:FF:000053">
    <property type="entry name" value="Homogentisate 1,2-dioxygenase"/>
    <property type="match status" value="1"/>
</dbReference>
<dbReference type="Gene3D" id="2.60.120.10">
    <property type="entry name" value="Jelly Rolls"/>
    <property type="match status" value="1"/>
</dbReference>
<dbReference type="HAMAP" id="MF_00334">
    <property type="entry name" value="Homogentis_dioxygen"/>
    <property type="match status" value="1"/>
</dbReference>
<dbReference type="InterPro" id="IPR046451">
    <property type="entry name" value="HgmA_C"/>
</dbReference>
<dbReference type="InterPro" id="IPR046452">
    <property type="entry name" value="HgmA_N"/>
</dbReference>
<dbReference type="InterPro" id="IPR005708">
    <property type="entry name" value="Homogentis_dOase"/>
</dbReference>
<dbReference type="InterPro" id="IPR022950">
    <property type="entry name" value="Homogentis_dOase_bac"/>
</dbReference>
<dbReference type="InterPro" id="IPR014710">
    <property type="entry name" value="RmlC-like_jellyroll"/>
</dbReference>
<dbReference type="InterPro" id="IPR011051">
    <property type="entry name" value="RmlC_Cupin_sf"/>
</dbReference>
<dbReference type="NCBIfam" id="TIGR01015">
    <property type="entry name" value="hmgA"/>
    <property type="match status" value="1"/>
</dbReference>
<dbReference type="PANTHER" id="PTHR11056">
    <property type="entry name" value="HOMOGENTISATE 1,2-DIOXYGENASE"/>
    <property type="match status" value="1"/>
</dbReference>
<dbReference type="PANTHER" id="PTHR11056:SF0">
    <property type="entry name" value="HOMOGENTISATE 1,2-DIOXYGENASE"/>
    <property type="match status" value="1"/>
</dbReference>
<dbReference type="Pfam" id="PF04209">
    <property type="entry name" value="HgmA_C"/>
    <property type="match status" value="1"/>
</dbReference>
<dbReference type="Pfam" id="PF20510">
    <property type="entry name" value="HgmA_N"/>
    <property type="match status" value="1"/>
</dbReference>
<dbReference type="SUPFAM" id="SSF51182">
    <property type="entry name" value="RmlC-like cupins"/>
    <property type="match status" value="1"/>
</dbReference>
<evidence type="ECO:0000255" key="1">
    <source>
        <dbReference type="HAMAP-Rule" id="MF_00334"/>
    </source>
</evidence>
<comment type="function">
    <text evidence="1">Involved in the catabolism of homogentisate (2,5-dihydroxyphenylacetate or 2,5-OH-PhAc), a central intermediate in the degradation of phenylalanine and tyrosine. Catalyzes the oxidative ring cleavage of the aromatic ring of homogentisate to yield maleylacetoacetate.</text>
</comment>
<comment type="catalytic activity">
    <reaction evidence="1">
        <text>homogentisate + O2 = 4-maleylacetoacetate + H(+)</text>
        <dbReference type="Rhea" id="RHEA:15449"/>
        <dbReference type="ChEBI" id="CHEBI:15378"/>
        <dbReference type="ChEBI" id="CHEBI:15379"/>
        <dbReference type="ChEBI" id="CHEBI:16169"/>
        <dbReference type="ChEBI" id="CHEBI:17105"/>
        <dbReference type="EC" id="1.13.11.5"/>
    </reaction>
</comment>
<comment type="cofactor">
    <cofactor evidence="1">
        <name>Fe cation</name>
        <dbReference type="ChEBI" id="CHEBI:24875"/>
    </cofactor>
</comment>
<comment type="pathway">
    <text evidence="1">Amino-acid degradation; L-phenylalanine degradation; acetoacetate and fumarate from L-phenylalanine: step 4/6.</text>
</comment>
<comment type="subunit">
    <text evidence="1">Hexamer; dimer of trimers.</text>
</comment>
<comment type="similarity">
    <text evidence="1">Belongs to the homogentisate dioxygenase family.</text>
</comment>
<proteinExistence type="inferred from homology"/>
<accession>B3PWZ9</accession>
<protein>
    <recommendedName>
        <fullName evidence="1">Homogentisate 1,2-dioxygenase</fullName>
        <shortName evidence="1">HGDO</shortName>
        <ecNumber evidence="1">1.13.11.5</ecNumber>
    </recommendedName>
    <alternativeName>
        <fullName evidence="1">Homogentisate oxygenase</fullName>
    </alternativeName>
    <alternativeName>
        <fullName evidence="1">Homogentisic acid oxidase</fullName>
    </alternativeName>
    <alternativeName>
        <fullName evidence="1">Homogentisicase</fullName>
    </alternativeName>
</protein>